<protein>
    <recommendedName>
        <fullName evidence="1">Small ribosomal subunit protein uS14</fullName>
    </recommendedName>
    <alternativeName>
        <fullName evidence="2">30S ribosomal protein S14</fullName>
    </alternativeName>
</protein>
<sequence>MAKKSMKNRELKRQLTVAKFAKKRAELKATIVNLNASPEERFAAVVALQKQPRDASASRLRNRCRLTGRPHGVYRKFGLGRNMLRQAAMRGDVPGLVKASW</sequence>
<feature type="chain" id="PRO_1000128517" description="Small ribosomal subunit protein uS14">
    <location>
        <begin position="1"/>
        <end position="101"/>
    </location>
</feature>
<organism>
    <name type="scientific">Pseudomonas putida (strain ATCC 700007 / DSM 6899 / JCM 31910 / BCRC 17059 / LMG 24140 / F1)</name>
    <dbReference type="NCBI Taxonomy" id="351746"/>
    <lineage>
        <taxon>Bacteria</taxon>
        <taxon>Pseudomonadati</taxon>
        <taxon>Pseudomonadota</taxon>
        <taxon>Gammaproteobacteria</taxon>
        <taxon>Pseudomonadales</taxon>
        <taxon>Pseudomonadaceae</taxon>
        <taxon>Pseudomonas</taxon>
    </lineage>
</organism>
<keyword id="KW-0687">Ribonucleoprotein</keyword>
<keyword id="KW-0689">Ribosomal protein</keyword>
<keyword id="KW-0694">RNA-binding</keyword>
<keyword id="KW-0699">rRNA-binding</keyword>
<dbReference type="EMBL" id="CP000712">
    <property type="protein sequence ID" value="ABQ76670.1"/>
    <property type="molecule type" value="Genomic_DNA"/>
</dbReference>
<dbReference type="SMR" id="A5VXR0"/>
<dbReference type="KEGG" id="ppf:Pput_0500"/>
<dbReference type="eggNOG" id="COG0199">
    <property type="taxonomic scope" value="Bacteria"/>
</dbReference>
<dbReference type="HOGENOM" id="CLU_139869_0_1_6"/>
<dbReference type="GO" id="GO:0005737">
    <property type="term" value="C:cytoplasm"/>
    <property type="evidence" value="ECO:0007669"/>
    <property type="project" value="UniProtKB-ARBA"/>
</dbReference>
<dbReference type="GO" id="GO:0015935">
    <property type="term" value="C:small ribosomal subunit"/>
    <property type="evidence" value="ECO:0007669"/>
    <property type="project" value="TreeGrafter"/>
</dbReference>
<dbReference type="GO" id="GO:0019843">
    <property type="term" value="F:rRNA binding"/>
    <property type="evidence" value="ECO:0007669"/>
    <property type="project" value="UniProtKB-UniRule"/>
</dbReference>
<dbReference type="GO" id="GO:0003735">
    <property type="term" value="F:structural constituent of ribosome"/>
    <property type="evidence" value="ECO:0007669"/>
    <property type="project" value="InterPro"/>
</dbReference>
<dbReference type="GO" id="GO:0006412">
    <property type="term" value="P:translation"/>
    <property type="evidence" value="ECO:0007669"/>
    <property type="project" value="UniProtKB-UniRule"/>
</dbReference>
<dbReference type="FunFam" id="1.10.287.1480:FF:000001">
    <property type="entry name" value="30S ribosomal protein S14"/>
    <property type="match status" value="1"/>
</dbReference>
<dbReference type="Gene3D" id="1.10.287.1480">
    <property type="match status" value="1"/>
</dbReference>
<dbReference type="HAMAP" id="MF_00537">
    <property type="entry name" value="Ribosomal_uS14_1"/>
    <property type="match status" value="1"/>
</dbReference>
<dbReference type="InterPro" id="IPR001209">
    <property type="entry name" value="Ribosomal_uS14"/>
</dbReference>
<dbReference type="InterPro" id="IPR023036">
    <property type="entry name" value="Ribosomal_uS14_bac/plastid"/>
</dbReference>
<dbReference type="NCBIfam" id="NF006477">
    <property type="entry name" value="PRK08881.1"/>
    <property type="match status" value="1"/>
</dbReference>
<dbReference type="PANTHER" id="PTHR19836">
    <property type="entry name" value="30S RIBOSOMAL PROTEIN S14"/>
    <property type="match status" value="1"/>
</dbReference>
<dbReference type="PANTHER" id="PTHR19836:SF19">
    <property type="entry name" value="SMALL RIBOSOMAL SUBUNIT PROTEIN US14M"/>
    <property type="match status" value="1"/>
</dbReference>
<dbReference type="Pfam" id="PF00253">
    <property type="entry name" value="Ribosomal_S14"/>
    <property type="match status" value="1"/>
</dbReference>
<dbReference type="SUPFAM" id="SSF57716">
    <property type="entry name" value="Glucocorticoid receptor-like (DNA-binding domain)"/>
    <property type="match status" value="1"/>
</dbReference>
<proteinExistence type="inferred from homology"/>
<gene>
    <name evidence="1" type="primary">rpsN</name>
    <name type="ordered locus">Pput_0500</name>
</gene>
<comment type="function">
    <text evidence="1">Binds 16S rRNA, required for the assembly of 30S particles and may also be responsible for determining the conformation of the 16S rRNA at the A site.</text>
</comment>
<comment type="subunit">
    <text evidence="1">Part of the 30S ribosomal subunit. Contacts proteins S3 and S10.</text>
</comment>
<comment type="similarity">
    <text evidence="1">Belongs to the universal ribosomal protein uS14 family.</text>
</comment>
<reference key="1">
    <citation type="submission" date="2007-05" db="EMBL/GenBank/DDBJ databases">
        <title>Complete sequence of Pseudomonas putida F1.</title>
        <authorList>
            <consortium name="US DOE Joint Genome Institute"/>
            <person name="Copeland A."/>
            <person name="Lucas S."/>
            <person name="Lapidus A."/>
            <person name="Barry K."/>
            <person name="Detter J.C."/>
            <person name="Glavina del Rio T."/>
            <person name="Hammon N."/>
            <person name="Israni S."/>
            <person name="Dalin E."/>
            <person name="Tice H."/>
            <person name="Pitluck S."/>
            <person name="Chain P."/>
            <person name="Malfatti S."/>
            <person name="Shin M."/>
            <person name="Vergez L."/>
            <person name="Schmutz J."/>
            <person name="Larimer F."/>
            <person name="Land M."/>
            <person name="Hauser L."/>
            <person name="Kyrpides N."/>
            <person name="Lykidis A."/>
            <person name="Parales R."/>
            <person name="Richardson P."/>
        </authorList>
    </citation>
    <scope>NUCLEOTIDE SEQUENCE [LARGE SCALE GENOMIC DNA]</scope>
    <source>
        <strain>ATCC 700007 / DSM 6899 / JCM 31910 / BCRC 17059 / LMG 24140 / F1</strain>
    </source>
</reference>
<accession>A5VXR0</accession>
<name>RS14_PSEP1</name>
<evidence type="ECO:0000255" key="1">
    <source>
        <dbReference type="HAMAP-Rule" id="MF_00537"/>
    </source>
</evidence>
<evidence type="ECO:0000305" key="2"/>